<name>SNX5_HUMAN</name>
<accession>Q9Y5X3</accession>
<accession>B7ZKN3</accession>
<accession>D3DW26</accession>
<accession>Q52LC4</accession>
<accession>Q7KZN0</accession>
<accession>Q9BWP0</accession>
<reference key="1">
    <citation type="journal article" date="2001" name="Biochem. J.">
        <title>A large family of endosome-localized proteins related to sorting nexin 1.</title>
        <authorList>
            <person name="Teasdale R.D."/>
            <person name="Loci D."/>
            <person name="Houghton F."/>
            <person name="Karlsson L."/>
            <person name="Gleeson P.A."/>
        </authorList>
    </citation>
    <scope>NUCLEOTIDE SEQUENCE [MRNA] (ISOFORM 1)</scope>
    <scope>SUBCELLULAR LOCATION</scope>
</reference>
<reference key="2">
    <citation type="submission" date="2003-05" db="EMBL/GenBank/DDBJ databases">
        <title>Cloning of human full-length CDSs in BD Creator(TM) system donor vector.</title>
        <authorList>
            <person name="Kalnine N."/>
            <person name="Chen X."/>
            <person name="Rolfs A."/>
            <person name="Halleck A."/>
            <person name="Hines L."/>
            <person name="Eisenstein S."/>
            <person name="Koundinya M."/>
            <person name="Raphael J."/>
            <person name="Moreira D."/>
            <person name="Kelley T."/>
            <person name="LaBaer J."/>
            <person name="Lin Y."/>
            <person name="Phelan M."/>
            <person name="Farmer A."/>
        </authorList>
    </citation>
    <scope>NUCLEOTIDE SEQUENCE [LARGE SCALE MRNA] (ISOFORM 2)</scope>
</reference>
<reference key="3">
    <citation type="journal article" date="2004" name="Nat. Genet.">
        <title>Complete sequencing and characterization of 21,243 full-length human cDNAs.</title>
        <authorList>
            <person name="Ota T."/>
            <person name="Suzuki Y."/>
            <person name="Nishikawa T."/>
            <person name="Otsuki T."/>
            <person name="Sugiyama T."/>
            <person name="Irie R."/>
            <person name="Wakamatsu A."/>
            <person name="Hayashi K."/>
            <person name="Sato H."/>
            <person name="Nagai K."/>
            <person name="Kimura K."/>
            <person name="Makita H."/>
            <person name="Sekine M."/>
            <person name="Obayashi M."/>
            <person name="Nishi T."/>
            <person name="Shibahara T."/>
            <person name="Tanaka T."/>
            <person name="Ishii S."/>
            <person name="Yamamoto J."/>
            <person name="Saito K."/>
            <person name="Kawai Y."/>
            <person name="Isono Y."/>
            <person name="Nakamura Y."/>
            <person name="Nagahari K."/>
            <person name="Murakami K."/>
            <person name="Yasuda T."/>
            <person name="Iwayanagi T."/>
            <person name="Wagatsuma M."/>
            <person name="Shiratori A."/>
            <person name="Sudo H."/>
            <person name="Hosoiri T."/>
            <person name="Kaku Y."/>
            <person name="Kodaira H."/>
            <person name="Kondo H."/>
            <person name="Sugawara M."/>
            <person name="Takahashi M."/>
            <person name="Kanda K."/>
            <person name="Yokoi T."/>
            <person name="Furuya T."/>
            <person name="Kikkawa E."/>
            <person name="Omura Y."/>
            <person name="Abe K."/>
            <person name="Kamihara K."/>
            <person name="Katsuta N."/>
            <person name="Sato K."/>
            <person name="Tanikawa M."/>
            <person name="Yamazaki M."/>
            <person name="Ninomiya K."/>
            <person name="Ishibashi T."/>
            <person name="Yamashita H."/>
            <person name="Murakawa K."/>
            <person name="Fujimori K."/>
            <person name="Tanai H."/>
            <person name="Kimata M."/>
            <person name="Watanabe M."/>
            <person name="Hiraoka S."/>
            <person name="Chiba Y."/>
            <person name="Ishida S."/>
            <person name="Ono Y."/>
            <person name="Takiguchi S."/>
            <person name="Watanabe S."/>
            <person name="Yosida M."/>
            <person name="Hotuta T."/>
            <person name="Kusano J."/>
            <person name="Kanehori K."/>
            <person name="Takahashi-Fujii A."/>
            <person name="Hara H."/>
            <person name="Tanase T.-O."/>
            <person name="Nomura Y."/>
            <person name="Togiya S."/>
            <person name="Komai F."/>
            <person name="Hara R."/>
            <person name="Takeuchi K."/>
            <person name="Arita M."/>
            <person name="Imose N."/>
            <person name="Musashino K."/>
            <person name="Yuuki H."/>
            <person name="Oshima A."/>
            <person name="Sasaki N."/>
            <person name="Aotsuka S."/>
            <person name="Yoshikawa Y."/>
            <person name="Matsunawa H."/>
            <person name="Ichihara T."/>
            <person name="Shiohata N."/>
            <person name="Sano S."/>
            <person name="Moriya S."/>
            <person name="Momiyama H."/>
            <person name="Satoh N."/>
            <person name="Takami S."/>
            <person name="Terashima Y."/>
            <person name="Suzuki O."/>
            <person name="Nakagawa S."/>
            <person name="Senoh A."/>
            <person name="Mizoguchi H."/>
            <person name="Goto Y."/>
            <person name="Shimizu F."/>
            <person name="Wakebe H."/>
            <person name="Hishigaki H."/>
            <person name="Watanabe T."/>
            <person name="Sugiyama A."/>
            <person name="Takemoto M."/>
            <person name="Kawakami B."/>
            <person name="Yamazaki M."/>
            <person name="Watanabe K."/>
            <person name="Kumagai A."/>
            <person name="Itakura S."/>
            <person name="Fukuzumi Y."/>
            <person name="Fujimori Y."/>
            <person name="Komiyama M."/>
            <person name="Tashiro H."/>
            <person name="Tanigami A."/>
            <person name="Fujiwara T."/>
            <person name="Ono T."/>
            <person name="Yamada K."/>
            <person name="Fujii Y."/>
            <person name="Ozaki K."/>
            <person name="Hirao M."/>
            <person name="Ohmori Y."/>
            <person name="Kawabata A."/>
            <person name="Hikiji T."/>
            <person name="Kobatake N."/>
            <person name="Inagaki H."/>
            <person name="Ikema Y."/>
            <person name="Okamoto S."/>
            <person name="Okitani R."/>
            <person name="Kawakami T."/>
            <person name="Noguchi S."/>
            <person name="Itoh T."/>
            <person name="Shigeta K."/>
            <person name="Senba T."/>
            <person name="Matsumura K."/>
            <person name="Nakajima Y."/>
            <person name="Mizuno T."/>
            <person name="Morinaga M."/>
            <person name="Sasaki M."/>
            <person name="Togashi T."/>
            <person name="Oyama M."/>
            <person name="Hata H."/>
            <person name="Watanabe M."/>
            <person name="Komatsu T."/>
            <person name="Mizushima-Sugano J."/>
            <person name="Satoh T."/>
            <person name="Shirai Y."/>
            <person name="Takahashi Y."/>
            <person name="Nakagawa K."/>
            <person name="Okumura K."/>
            <person name="Nagase T."/>
            <person name="Nomura N."/>
            <person name="Kikuchi H."/>
            <person name="Masuho Y."/>
            <person name="Yamashita R."/>
            <person name="Nakai K."/>
            <person name="Yada T."/>
            <person name="Nakamura Y."/>
            <person name="Ohara O."/>
            <person name="Isogai T."/>
            <person name="Sugano S."/>
        </authorList>
    </citation>
    <scope>NUCLEOTIDE SEQUENCE [LARGE SCALE MRNA] (ISOFORMS 1 AND 2)</scope>
    <source>
        <tissue>Ovarian carcinoma</tissue>
    </source>
</reference>
<reference key="4">
    <citation type="journal article" date="2001" name="Nature">
        <title>The DNA sequence and comparative analysis of human chromosome 20.</title>
        <authorList>
            <person name="Deloukas P."/>
            <person name="Matthews L.H."/>
            <person name="Ashurst J.L."/>
            <person name="Burton J."/>
            <person name="Gilbert J.G.R."/>
            <person name="Jones M."/>
            <person name="Stavrides G."/>
            <person name="Almeida J.P."/>
            <person name="Babbage A.K."/>
            <person name="Bagguley C.L."/>
            <person name="Bailey J."/>
            <person name="Barlow K.F."/>
            <person name="Bates K.N."/>
            <person name="Beard L.M."/>
            <person name="Beare D.M."/>
            <person name="Beasley O.P."/>
            <person name="Bird C.P."/>
            <person name="Blakey S.E."/>
            <person name="Bridgeman A.M."/>
            <person name="Brown A.J."/>
            <person name="Buck D."/>
            <person name="Burrill W.D."/>
            <person name="Butler A.P."/>
            <person name="Carder C."/>
            <person name="Carter N.P."/>
            <person name="Chapman J.C."/>
            <person name="Clamp M."/>
            <person name="Clark G."/>
            <person name="Clark L.N."/>
            <person name="Clark S.Y."/>
            <person name="Clee C.M."/>
            <person name="Clegg S."/>
            <person name="Cobley V.E."/>
            <person name="Collier R.E."/>
            <person name="Connor R.E."/>
            <person name="Corby N.R."/>
            <person name="Coulson A."/>
            <person name="Coville G.J."/>
            <person name="Deadman R."/>
            <person name="Dhami P.D."/>
            <person name="Dunn M."/>
            <person name="Ellington A.G."/>
            <person name="Frankland J.A."/>
            <person name="Fraser A."/>
            <person name="French L."/>
            <person name="Garner P."/>
            <person name="Grafham D.V."/>
            <person name="Griffiths C."/>
            <person name="Griffiths M.N.D."/>
            <person name="Gwilliam R."/>
            <person name="Hall R.E."/>
            <person name="Hammond S."/>
            <person name="Harley J.L."/>
            <person name="Heath P.D."/>
            <person name="Ho S."/>
            <person name="Holden J.L."/>
            <person name="Howden P.J."/>
            <person name="Huckle E."/>
            <person name="Hunt A.R."/>
            <person name="Hunt S.E."/>
            <person name="Jekosch K."/>
            <person name="Johnson C.M."/>
            <person name="Johnson D."/>
            <person name="Kay M.P."/>
            <person name="Kimberley A.M."/>
            <person name="King A."/>
            <person name="Knights A."/>
            <person name="Laird G.K."/>
            <person name="Lawlor S."/>
            <person name="Lehvaeslaiho M.H."/>
            <person name="Leversha M.A."/>
            <person name="Lloyd C."/>
            <person name="Lloyd D.M."/>
            <person name="Lovell J.D."/>
            <person name="Marsh V.L."/>
            <person name="Martin S.L."/>
            <person name="McConnachie L.J."/>
            <person name="McLay K."/>
            <person name="McMurray A.A."/>
            <person name="Milne S.A."/>
            <person name="Mistry D."/>
            <person name="Moore M.J.F."/>
            <person name="Mullikin J.C."/>
            <person name="Nickerson T."/>
            <person name="Oliver K."/>
            <person name="Parker A."/>
            <person name="Patel R."/>
            <person name="Pearce T.A.V."/>
            <person name="Peck A.I."/>
            <person name="Phillimore B.J.C.T."/>
            <person name="Prathalingam S.R."/>
            <person name="Plumb R.W."/>
            <person name="Ramsay H."/>
            <person name="Rice C.M."/>
            <person name="Ross M.T."/>
            <person name="Scott C.E."/>
            <person name="Sehra H.K."/>
            <person name="Shownkeen R."/>
            <person name="Sims S."/>
            <person name="Skuce C.D."/>
            <person name="Smith M.L."/>
            <person name="Soderlund C."/>
            <person name="Steward C.A."/>
            <person name="Sulston J.E."/>
            <person name="Swann R.M."/>
            <person name="Sycamore N."/>
            <person name="Taylor R."/>
            <person name="Tee L."/>
            <person name="Thomas D.W."/>
            <person name="Thorpe A."/>
            <person name="Tracey A."/>
            <person name="Tromans A.C."/>
            <person name="Vaudin M."/>
            <person name="Wall M."/>
            <person name="Wallis J.M."/>
            <person name="Whitehead S.L."/>
            <person name="Whittaker P."/>
            <person name="Willey D.L."/>
            <person name="Williams L."/>
            <person name="Williams S.A."/>
            <person name="Wilming L."/>
            <person name="Wray P.W."/>
            <person name="Hubbard T."/>
            <person name="Durbin R.M."/>
            <person name="Bentley D.R."/>
            <person name="Beck S."/>
            <person name="Rogers J."/>
        </authorList>
    </citation>
    <scope>NUCLEOTIDE SEQUENCE [LARGE SCALE GENOMIC DNA]</scope>
</reference>
<reference key="5">
    <citation type="submission" date="2005-09" db="EMBL/GenBank/DDBJ databases">
        <authorList>
            <person name="Mural R.J."/>
            <person name="Istrail S."/>
            <person name="Sutton G.G."/>
            <person name="Florea L."/>
            <person name="Halpern A.L."/>
            <person name="Mobarry C.M."/>
            <person name="Lippert R."/>
            <person name="Walenz B."/>
            <person name="Shatkay H."/>
            <person name="Dew I."/>
            <person name="Miller J.R."/>
            <person name="Flanigan M.J."/>
            <person name="Edwards N.J."/>
            <person name="Bolanos R."/>
            <person name="Fasulo D."/>
            <person name="Halldorsson B.V."/>
            <person name="Hannenhalli S."/>
            <person name="Turner R."/>
            <person name="Yooseph S."/>
            <person name="Lu F."/>
            <person name="Nusskern D.R."/>
            <person name="Shue B.C."/>
            <person name="Zheng X.H."/>
            <person name="Zhong F."/>
            <person name="Delcher A.L."/>
            <person name="Huson D.H."/>
            <person name="Kravitz S.A."/>
            <person name="Mouchard L."/>
            <person name="Reinert K."/>
            <person name="Remington K.A."/>
            <person name="Clark A.G."/>
            <person name="Waterman M.S."/>
            <person name="Eichler E.E."/>
            <person name="Adams M.D."/>
            <person name="Hunkapiller M.W."/>
            <person name="Myers E.W."/>
            <person name="Venter J.C."/>
        </authorList>
    </citation>
    <scope>NUCLEOTIDE SEQUENCE [LARGE SCALE GENOMIC DNA]</scope>
</reference>
<reference key="6">
    <citation type="journal article" date="2004" name="Genome Res.">
        <title>The status, quality, and expansion of the NIH full-length cDNA project: the Mammalian Gene Collection (MGC).</title>
        <authorList>
            <consortium name="The MGC Project Team"/>
        </authorList>
    </citation>
    <scope>NUCLEOTIDE SEQUENCE [LARGE SCALE MRNA] (ISOFORM 1)</scope>
    <source>
        <tissue>Brain</tissue>
        <tissue>Placenta</tissue>
    </source>
</reference>
<reference key="7">
    <citation type="journal article" date="2004" name="J. Cell Sci.">
        <title>Sorting nexin 5 is localized to a subdomain of the early endosomes and is recruited to the plasma membrane following EGF stimulation.</title>
        <authorList>
            <person name="Merino-Trigo A."/>
            <person name="Kerr M.C."/>
            <person name="Houghton F."/>
            <person name="Lindberg A."/>
            <person name="Mitchell C."/>
            <person name="Teasdale R.D."/>
            <person name="Gleeson P.A."/>
        </authorList>
    </citation>
    <scope>SUBCELLULAR LOCATION</scope>
    <scope>PHOSPHATIDYLINOSITOL 3,4-BISPHOSPHATE BINDING</scope>
</reference>
<reference key="8">
    <citation type="journal article" date="2006" name="FEBS Lett.">
        <title>Snx5, as a Mind bomb-binding protein, is expressed in hematopoietic and endothelial precursor cells in zebrafish.</title>
        <authorList>
            <person name="Yoo K.W."/>
            <person name="Kim E.H."/>
            <person name="Jung S.H."/>
            <person name="Rhee M."/>
            <person name="Koo B.K."/>
            <person name="Yoon K.J."/>
            <person name="Kong Y.Y."/>
            <person name="Kim C.H."/>
        </authorList>
    </citation>
    <scope>INTERACTION WITH MIB1</scope>
</reference>
<reference key="9">
    <citation type="journal article" date="2006" name="J. Cell Sci.">
        <title>Visualisation of macropinosome maturation by the recruitment of sorting nexins.</title>
        <authorList>
            <person name="Kerr M.C."/>
            <person name="Lindsay M.R."/>
            <person name="Luetterforst R."/>
            <person name="Hamilton N."/>
            <person name="Simpson F."/>
            <person name="Parton R.G."/>
            <person name="Gleeson P.A."/>
            <person name="Teasdale R.D."/>
        </authorList>
    </citation>
    <scope>INTERACTION WITH SNX1</scope>
    <scope>SUBCELLULAR LOCATION</scope>
</reference>
<reference key="10">
    <citation type="journal article" date="2007" name="J. Cell Sci.">
        <title>A loss-of-function screen reveals SNX5 and SNX6 as potential components of the mammalian retromer.</title>
        <authorList>
            <person name="Wassmer T."/>
            <person name="Attar N."/>
            <person name="Bujny M.V."/>
            <person name="Oakley J."/>
            <person name="Traer C.J."/>
            <person name="Cullen P.J."/>
        </authorList>
    </citation>
    <scope>FUNCTION</scope>
    <scope>SUBCELLULAR LOCATION</scope>
</reference>
<reference key="11">
    <citation type="journal article" date="2008" name="BMC Cell Biol.">
        <title>A role for SNX5 in the regulation of macropinocytosis.</title>
        <authorList>
            <person name="Lim J.P."/>
            <person name="Wang J.T."/>
            <person name="Kerr M.C."/>
            <person name="Teasdale R.D."/>
            <person name="Gleeson P.A."/>
        </authorList>
    </citation>
    <scope>FUNCTION</scope>
    <scope>SUBCELLULAR LOCATION</scope>
</reference>
<reference key="12">
    <citation type="journal article" date="2008" name="Mol. Biol. Cell">
        <title>The DHR1 domain of DOCK180 binds to SNX5 and regulates cation-independent mannose 6-phosphate receptor transport.</title>
        <authorList>
            <person name="Hara S."/>
            <person name="Kiyokawa E."/>
            <person name="Iemura S."/>
            <person name="Natsume T."/>
            <person name="Wassmer T."/>
            <person name="Cullen P.J."/>
            <person name="Hiai H."/>
            <person name="Matsuda M."/>
        </authorList>
    </citation>
    <scope>FUNCTION</scope>
    <scope>INTERACTION WITH DOCK1</scope>
</reference>
<reference key="13">
    <citation type="journal article" date="2009" name="Anal. Chem.">
        <title>Lys-N and trypsin cover complementary parts of the phosphoproteome in a refined SCX-based approach.</title>
        <authorList>
            <person name="Gauci S."/>
            <person name="Helbig A.O."/>
            <person name="Slijper M."/>
            <person name="Krijgsveld J."/>
            <person name="Heck A.J."/>
            <person name="Mohammed S."/>
        </authorList>
    </citation>
    <scope>ACETYLATION [LARGE SCALE ANALYSIS] AT ALA-2</scope>
    <scope>CLEAVAGE OF INITIATOR METHIONINE [LARGE SCALE ANALYSIS]</scope>
    <scope>IDENTIFICATION BY MASS SPECTROMETRY [LARGE SCALE ANALYSIS]</scope>
</reference>
<reference key="14">
    <citation type="journal article" date="2009" name="Dev. Cell">
        <title>The retromer coat complex coordinates endosomal sorting and dynein-mediated transport, with carrier recognition by the trans-Golgi network.</title>
        <authorList>
            <person name="Wassmer T."/>
            <person name="Attar N."/>
            <person name="Harterink M."/>
            <person name="van Weering J.R."/>
            <person name="Traer C.J."/>
            <person name="Oakley J."/>
            <person name="Goud B."/>
            <person name="Stephens D.J."/>
            <person name="Verkade P."/>
            <person name="Korswagen H.C."/>
            <person name="Cullen P.J."/>
        </authorList>
    </citation>
    <scope>INTERACTION WITH SNX1; SNX2; VPS26A; VPS29; VPS35 AND DCTN1</scope>
</reference>
<reference key="15">
    <citation type="journal article" date="2009" name="Sci. Signal.">
        <title>Quantitative phosphoproteomic analysis of T cell receptor signaling reveals system-wide modulation of protein-protein interactions.</title>
        <authorList>
            <person name="Mayya V."/>
            <person name="Lundgren D.H."/>
            <person name="Hwang S.-I."/>
            <person name="Rezaul K."/>
            <person name="Wu L."/>
            <person name="Eng J.K."/>
            <person name="Rodionov V."/>
            <person name="Han D.K."/>
        </authorList>
    </citation>
    <scope>IDENTIFICATION BY MASS SPECTROMETRY [LARGE SCALE ANALYSIS]</scope>
    <source>
        <tissue>Leukemic T-cell</tissue>
    </source>
</reference>
<reference key="16">
    <citation type="journal article" date="2009" name="Science">
        <title>Lysine acetylation targets protein complexes and co-regulates major cellular functions.</title>
        <authorList>
            <person name="Choudhary C."/>
            <person name="Kumar C."/>
            <person name="Gnad F."/>
            <person name="Nielsen M.L."/>
            <person name="Rehman M."/>
            <person name="Walther T.C."/>
            <person name="Olsen J.V."/>
            <person name="Mann M."/>
        </authorList>
    </citation>
    <scope>ACETYLATION [LARGE SCALE ANALYSIS] AT LYS-275</scope>
    <scope>IDENTIFICATION BY MASS SPECTROMETRY [LARGE SCALE ANALYSIS]</scope>
</reference>
<reference key="17">
    <citation type="journal article" date="2010" name="PLoS ONE">
        <title>The SNX-PX-BAR family in macropinocytosis: the regulation of macropinosome formation by SNX-PX-BAR proteins.</title>
        <authorList>
            <person name="Wang J.T."/>
            <person name="Kerr M.C."/>
            <person name="Karunaratne S."/>
            <person name="Jeanes A."/>
            <person name="Yap A.S."/>
            <person name="Teasdale R.D."/>
        </authorList>
    </citation>
    <scope>FUNCTION</scope>
    <scope>SUBCELLULAR LOCATION</scope>
</reference>
<reference key="18">
    <citation type="journal article" date="2011" name="BMC Syst. Biol.">
        <title>Initial characterization of the human central proteome.</title>
        <authorList>
            <person name="Burkard T.R."/>
            <person name="Planyavsky M."/>
            <person name="Kaupe I."/>
            <person name="Breitwieser F.P."/>
            <person name="Buerckstuemmer T."/>
            <person name="Bennett K.L."/>
            <person name="Superti-Furga G."/>
            <person name="Colinge J."/>
        </authorList>
    </citation>
    <scope>IDENTIFICATION BY MASS SPECTROMETRY [LARGE SCALE ANALYSIS]</scope>
</reference>
<reference key="19">
    <citation type="journal article" date="2012" name="EMBO J.">
        <title>Molecular basis for SNX-BAR-mediated assembly of distinct endosomal sorting tubules.</title>
        <authorList>
            <person name="van Weering J.R."/>
            <person name="Sessions R.B."/>
            <person name="Traer C.J."/>
            <person name="Kloer D.P."/>
            <person name="Bhatia V.K."/>
            <person name="Stamou D."/>
            <person name="Carlsson S.R."/>
            <person name="Hurley J.H."/>
            <person name="Cullen P.J."/>
        </authorList>
    </citation>
    <scope>FUNCTION</scope>
    <scope>INTERACTION WITH SNX1 AND SNX2</scope>
    <scope>DOMAIN</scope>
    <scope>MUTAGENESIS OF 186-PHE-PHE-187; GLU-280 AND GLU-383</scope>
</reference>
<reference key="20">
    <citation type="journal article" date="2012" name="Mol. Cell. Proteomics">
        <title>Comparative large-scale characterisation of plant vs. mammal proteins reveals similar and idiosyncratic N-alpha acetylation features.</title>
        <authorList>
            <person name="Bienvenut W.V."/>
            <person name="Sumpton D."/>
            <person name="Martinez A."/>
            <person name="Lilla S."/>
            <person name="Espagne C."/>
            <person name="Meinnel T."/>
            <person name="Giglione C."/>
        </authorList>
    </citation>
    <scope>ACETYLATION [LARGE SCALE ANALYSIS] AT ALA-2</scope>
    <scope>CLEAVAGE OF INITIATOR METHIONINE [LARGE SCALE ANALYSIS]</scope>
    <scope>IDENTIFICATION BY MASS SPECTROMETRY [LARGE SCALE ANALYSIS]</scope>
</reference>
<reference key="21">
    <citation type="journal article" date="2012" name="Proc. Natl. Acad. Sci. U.S.A.">
        <title>N-terminal acetylome analyses and functional insights of the N-terminal acetyltransferase NatB.</title>
        <authorList>
            <person name="Van Damme P."/>
            <person name="Lasa M."/>
            <person name="Polevoda B."/>
            <person name="Gazquez C."/>
            <person name="Elosegui-Artola A."/>
            <person name="Kim D.S."/>
            <person name="De Juan-Pardo E."/>
            <person name="Demeyer K."/>
            <person name="Hole K."/>
            <person name="Larrea E."/>
            <person name="Timmerman E."/>
            <person name="Prieto J."/>
            <person name="Arnesen T."/>
            <person name="Sherman F."/>
            <person name="Gevaert K."/>
            <person name="Aldabe R."/>
        </authorList>
    </citation>
    <scope>ACETYLATION [LARGE SCALE ANALYSIS] AT ALA-2</scope>
    <scope>CLEAVAGE OF INITIATOR METHIONINE [LARGE SCALE ANALYSIS]</scope>
    <scope>IDENTIFICATION BY MASS SPECTROMETRY [LARGE SCALE ANALYSIS]</scope>
</reference>
<reference key="22">
    <citation type="journal article" date="2013" name="Dev. Cell">
        <title>Endosomal type Igamma PIP 5-kinase controls EGF receptor lysosomal sorting.</title>
        <authorList>
            <person name="Sun Y."/>
            <person name="Hedman A.C."/>
            <person name="Tan X."/>
            <person name="Schill N.J."/>
            <person name="Anderson R.A."/>
        </authorList>
    </citation>
    <scope>FUNCTION</scope>
    <scope>INTERACTION WITH PIP5K1C</scope>
</reference>
<reference key="23">
    <citation type="journal article" date="2013" name="J. Proteome Res.">
        <title>Toward a comprehensive characterization of a human cancer cell phosphoproteome.</title>
        <authorList>
            <person name="Zhou H."/>
            <person name="Di Palma S."/>
            <person name="Preisinger C."/>
            <person name="Peng M."/>
            <person name="Polat A.N."/>
            <person name="Heck A.J."/>
            <person name="Mohammed S."/>
        </authorList>
    </citation>
    <scope>PHOSPHORYLATION [LARGE SCALE ANALYSIS] AT SER-193</scope>
    <scope>IDENTIFICATION BY MASS SPECTROMETRY [LARGE SCALE ANALYSIS]</scope>
    <source>
        <tissue>Erythroleukemia</tissue>
    </source>
</reference>
<reference key="24">
    <citation type="journal article" date="2014" name="J. Cell Sci.">
        <title>Isoform 5 of PIPKIgamma regulates the endosomal trafficking and degradation of E-cadherin.</title>
        <authorList>
            <person name="Schill N.J."/>
            <person name="Hedman A.C."/>
            <person name="Choi S."/>
            <person name="Anderson R.A."/>
        </authorList>
    </citation>
    <scope>FUNCTION</scope>
    <scope>SUBCELLULAR LOCATION</scope>
    <scope>PHOSPHOINOSITIDE BINDING</scope>
    <scope>INTERACTION WITH PIP5K1C AND HGS</scope>
    <scope>MUTAGENESIS OF LYS-224; ARG-235; LYS-324; LYS-328 AND ARG-330</scope>
</reference>
<reference key="25">
    <citation type="journal article" date="2014" name="J. Proteomics">
        <title>An enzyme assisted RP-RPLC approach for in-depth analysis of human liver phosphoproteome.</title>
        <authorList>
            <person name="Bian Y."/>
            <person name="Song C."/>
            <person name="Cheng K."/>
            <person name="Dong M."/>
            <person name="Wang F."/>
            <person name="Huang J."/>
            <person name="Sun D."/>
            <person name="Wang L."/>
            <person name="Ye M."/>
            <person name="Zou H."/>
        </authorList>
    </citation>
    <scope>IDENTIFICATION BY MASS SPECTROMETRY [LARGE SCALE ANALYSIS]</scope>
    <source>
        <tissue>Liver</tissue>
    </source>
</reference>
<reference key="26">
    <citation type="journal article" date="2015" name="Proteomics">
        <title>N-terminome analysis of the human mitochondrial proteome.</title>
        <authorList>
            <person name="Vaca Jacome A.S."/>
            <person name="Rabilloud T."/>
            <person name="Schaeffer-Reiss C."/>
            <person name="Rompais M."/>
            <person name="Ayoub D."/>
            <person name="Lane L."/>
            <person name="Bairoch A."/>
            <person name="Van Dorsselaer A."/>
            <person name="Carapito C."/>
        </authorList>
    </citation>
    <scope>IDENTIFICATION BY MASS SPECTROMETRY [LARGE SCALE ANALYSIS]</scope>
</reference>
<reference key="27">
    <citation type="journal article" date="2018" name="J. Virol.">
        <title>Interaction of Human Cytomegalovirus Tegument Proteins ppUL35 and ppUL35A with Sorting Nexin 5 Regulates Glycoprotein B (gpUL55) Localization.</title>
        <authorList>
            <person name="Maschkowitz G."/>
            <person name="Gaertner S."/>
            <person name="Hofmann-Winkler H."/>
            <person name="Fickenscher H."/>
            <person name="Winkler M."/>
        </authorList>
    </citation>
    <scope>INTERACTION WITH HUMAN CYTOMEGALOVIRUS PROTEINS UL35 AND UL35A (MICROBIAL INFECTION)</scope>
</reference>
<reference key="28">
    <citation type="journal article" date="2004" name="J. Exp. Med.">
        <title>Natural HLA class I polymorphism controls the pathway of antigen presentation and susceptibility to viral evasion.</title>
        <authorList>
            <person name="Zernich D."/>
            <person name="Purcell A.W."/>
            <person name="Macdonald W.A."/>
            <person name="Kjer-Nielsen L."/>
            <person name="Ely L.K."/>
            <person name="Laham N."/>
            <person name="Crockford T."/>
            <person name="Mifsud N.A."/>
            <person name="Bharadwaj M."/>
            <person name="Chang L."/>
            <person name="Tait B.D."/>
            <person name="Holdsworth R."/>
            <person name="Brooks A.G."/>
            <person name="Bottomley S.P."/>
            <person name="Beddoe T."/>
            <person name="Peh C.A."/>
            <person name="Rossjohn J."/>
            <person name="McCluskey J."/>
        </authorList>
    </citation>
    <scope>X-RAY CRYSTALLOGRAPHY (2.4 ANGSTROMS) OF 257-265 IN COMPLEX WITH HLA CLASS I HISTOCOMPATIBILITY COMPLEX</scope>
</reference>
<sequence length="404" mass="46816">MAAVPELLQQQEEDRSKLRSVSVDLNVDPSLQIDIPDALSERDKVKFTVHTKTTLPTFQSPEFSVTRQHEDFVWLHDTLIETTDYAGLIIPPAPTKPDFDGPREKMQKLGEGEGSMTKEEFAKMKQELEAEYLAVFKKTVSSHEVFLQRLSSHPVLSKDRNFHVFLEYDQDLSVRRKNTKEMFGGFFKSVVKSADEVLFTGVKEVDDFFEQEKNFLINYYNRIKDSCVKADKMTRSHKNVADDYIHTAACLHSLALEEPTVIKKYLLKVAELFEKLRKVEGRVSSDEDLKLTELLRYYMLNIEAAKDLLYRRTKALIDYENSNKALDKARLKSKDVKLAEAHQQECCQKFEQLSESAKEELINFKRKRVAAFRKNLIEMSELEIKHARNNVSLLQSCIDLFKNN</sequence>
<keyword id="KW-0002">3D-structure</keyword>
<keyword id="KW-0007">Acetylation</keyword>
<keyword id="KW-0025">Alternative splicing</keyword>
<keyword id="KW-1003">Cell membrane</keyword>
<keyword id="KW-0966">Cell projection</keyword>
<keyword id="KW-0963">Cytoplasm</keyword>
<keyword id="KW-0968">Cytoplasmic vesicle</keyword>
<keyword id="KW-0254">Endocytosis</keyword>
<keyword id="KW-0967">Endosome</keyword>
<keyword id="KW-0945">Host-virus interaction</keyword>
<keyword id="KW-0446">Lipid-binding</keyword>
<keyword id="KW-0472">Membrane</keyword>
<keyword id="KW-0597">Phosphoprotein</keyword>
<keyword id="KW-0653">Protein transport</keyword>
<keyword id="KW-1267">Proteomics identification</keyword>
<keyword id="KW-1185">Reference proteome</keyword>
<keyword id="KW-0813">Transport</keyword>
<proteinExistence type="evidence at protein level"/>
<protein>
    <recommendedName>
        <fullName>Sorting nexin-5</fullName>
    </recommendedName>
</protein>
<feature type="initiator methionine" description="Removed" evidence="25 27 28">
    <location>
        <position position="1"/>
    </location>
</feature>
<feature type="chain" id="PRO_0000213844" description="Sorting nexin-5">
    <location>
        <begin position="2"/>
        <end position="404"/>
    </location>
</feature>
<feature type="domain" description="PX" evidence="3">
    <location>
        <begin position="25"/>
        <end position="172"/>
    </location>
</feature>
<feature type="domain" description="BAR">
    <location>
        <begin position="202"/>
        <end position="404"/>
    </location>
</feature>
<feature type="region of interest" description="Interaction with DOCK1" evidence="10">
    <location>
        <begin position="169"/>
        <end position="261"/>
    </location>
</feature>
<feature type="region of interest" description="Membrane-binding amphipathic helix" evidence="21">
    <location>
        <begin position="183"/>
        <end position="200"/>
    </location>
</feature>
<feature type="binding site" evidence="2">
    <location>
        <begin position="40"/>
        <end position="46"/>
    </location>
    <ligand>
        <name>a 1,2-diacyl-sn-glycero-3-phospho-(1D-myo-inositol-4,5-bisphosphate)</name>
        <dbReference type="ChEBI" id="CHEBI:58456"/>
    </ligand>
</feature>
<feature type="binding site" evidence="2">
    <location>
        <begin position="99"/>
        <end position="105"/>
    </location>
    <ligand>
        <name>a 1,2-diacyl-sn-glycero-3-phospho-(1D-myo-inositol-4,5-bisphosphate)</name>
        <dbReference type="ChEBI" id="CHEBI:58456"/>
    </ligand>
</feature>
<feature type="binding site" evidence="2">
    <location>
        <begin position="113"/>
        <end position="116"/>
    </location>
    <ligand>
        <name>a 1,2-diacyl-sn-glycero-3-phospho-(1D-myo-inositol-4,5-bisphosphate)</name>
        <dbReference type="ChEBI" id="CHEBI:58456"/>
    </ligand>
</feature>
<feature type="modified residue" description="N-acetylalanine" evidence="25 27 28">
    <location>
        <position position="2"/>
    </location>
</feature>
<feature type="modified residue" description="Phosphoserine" evidence="29">
    <location>
        <position position="193"/>
    </location>
</feature>
<feature type="modified residue" description="N6-acetyllysine" evidence="26">
    <location>
        <position position="275"/>
    </location>
</feature>
<feature type="splice variant" id="VSP_056386" description="In isoform 2." evidence="18 22">
    <original>LRSVSVDLNVDPSLQIDIPDALSERDKVKFTVHTKTTLPTFQSPEFSVTRQHEDFVWLHDTLIETTDYAGLIIPPAPTKPDFDGPREKMQKLGEGEGSMTKEEFAKMKQ</original>
    <variation>VRSSQPQTPGRAALRAPGSLHSFPCASIGRGCSPPSPAREAPVRPGRPLSLVFTEGCPGESLWMSRILLGQNQRRGTLAPAQAPVPSGLGEMISGDPGMFFLKLSSASW</variation>
    <location>
        <begin position="18"/>
        <end position="126"/>
    </location>
</feature>
<feature type="splice variant" id="VSP_056387" description="In isoform 2." evidence="18 22">
    <location>
        <begin position="127"/>
        <end position="404"/>
    </location>
</feature>
<feature type="mutagenesis site" description="No effect on dimerization." evidence="14">
    <original>FF</original>
    <variation>EE</variation>
    <location>
        <begin position="186"/>
        <end position="187"/>
    </location>
</feature>
<feature type="mutagenesis site" description="Decreaes phosphoinositide binding, including PtdIns(3,4)P2 and PtdIns(3P); when associated with E-235, E-324, E-328 and E-330." evidence="15">
    <original>K</original>
    <variation>E</variation>
    <location>
        <position position="224"/>
    </location>
</feature>
<feature type="mutagenesis site" description="Decreaes phosphoinositide binding, including PtdIns(3,4)P2 and PtdIns(3P); when associated with E-224, E-324, E-328 and E-330." evidence="15">
    <original>R</original>
    <variation>E</variation>
    <location>
        <position position="235"/>
    </location>
</feature>
<feature type="mutagenesis site" description="Enables homodimerization; when associated with A-383." evidence="14">
    <original>E</original>
    <variation>A</variation>
    <location>
        <position position="280"/>
    </location>
</feature>
<feature type="mutagenesis site" description="Decreaes phosphoinositide binding, including PtdIns(3,4)P2 and PtdIns(3P); when associated with E-224, E-235, E-328 and E-330." evidence="15">
    <original>K</original>
    <variation>E</variation>
    <location>
        <position position="324"/>
    </location>
</feature>
<feature type="mutagenesis site" description="Decreaes phosphoinositide binding, including PtdIns(3,4)P2 and PtdIns(3P); when associated with E-224, E-235, E-324 and E-330." evidence="15">
    <original>K</original>
    <variation>E</variation>
    <location>
        <position position="328"/>
    </location>
</feature>
<feature type="mutagenesis site" description="Decreaes phosphoinositide binding, including PtdIns(3,4)P2 and PtdIns(3P); when associated with E-224, E-235, E-324 and E-328." evidence="15">
    <original>R</original>
    <variation>E</variation>
    <location>
        <position position="330"/>
    </location>
</feature>
<feature type="mutagenesis site" description="Enables homodimerization; when associated with A-280.">
    <original>E</original>
    <variation>A</variation>
    <location>
        <position position="383"/>
    </location>
</feature>
<feature type="sequence conflict" description="In Ref. 3." evidence="23" ref="3">
    <original>V</original>
    <variation>L</variation>
    <location>
        <position position="279"/>
    </location>
</feature>
<feature type="strand" evidence="31">
    <location>
        <begin position="31"/>
        <end position="34"/>
    </location>
</feature>
<feature type="strand" evidence="31">
    <location>
        <begin position="37"/>
        <end position="41"/>
    </location>
</feature>
<feature type="strand" evidence="31">
    <location>
        <begin position="44"/>
        <end position="53"/>
    </location>
</feature>
<feature type="strand" evidence="30">
    <location>
        <begin position="56"/>
        <end position="59"/>
    </location>
</feature>
<feature type="strand" evidence="31">
    <location>
        <begin position="61"/>
        <end position="68"/>
    </location>
</feature>
<feature type="helix" evidence="31">
    <location>
        <begin position="69"/>
        <end position="80"/>
    </location>
</feature>
<feature type="helix" evidence="31">
    <location>
        <begin position="83"/>
        <end position="85"/>
    </location>
</feature>
<feature type="helix" evidence="31">
    <location>
        <begin position="100"/>
        <end position="108"/>
    </location>
</feature>
<feature type="helix" evidence="31">
    <location>
        <begin position="112"/>
        <end position="114"/>
    </location>
</feature>
<feature type="helix" evidence="31">
    <location>
        <begin position="122"/>
        <end position="152"/>
    </location>
</feature>
<feature type="helix" evidence="31">
    <location>
        <begin position="156"/>
        <end position="158"/>
    </location>
</feature>
<feature type="helix" evidence="31">
    <location>
        <begin position="160"/>
        <end position="167"/>
    </location>
</feature>
<feature type="helix" evidence="31">
    <location>
        <begin position="172"/>
        <end position="175"/>
    </location>
</feature>
<feature type="helix" evidence="32">
    <location>
        <begin position="208"/>
        <end position="255"/>
    </location>
</feature>
<feature type="strand" evidence="32">
    <location>
        <begin position="256"/>
        <end position="258"/>
    </location>
</feature>
<feature type="helix" evidence="32">
    <location>
        <begin position="260"/>
        <end position="290"/>
    </location>
</feature>
<feature type="helix" evidence="32">
    <location>
        <begin position="292"/>
        <end position="323"/>
    </location>
</feature>
<feature type="helix" evidence="32">
    <location>
        <begin position="345"/>
        <end position="402"/>
    </location>
</feature>
<comment type="function">
    <text evidence="11 13 16 19 20 21">Involved in several stages of intracellular trafficking. Interacts with membranes containing phosphatidylinositol 3-phosphate (PtdIns(3P)) or phosphatidylinositol 3,4-bisphosphate (PtdIns(3,4)P2) (PubMed:15561769). Acts in part as component of the retromer membrane-deforming SNX-BAR subcomplex. The SNX-BAR retromer mediates retrograde transport of cargo proteins from endosomes to the trans-Golgi network (TGN) and is involved in endosome-to-plasma membrane transport for cargo protein recycling. The SNX-BAR subcomplex functions to deform the donor membrane into a tubular profile called endosome-to-TGN transport carrier (ETC) (Probable). Does not have in vitro vesicle-to-membrane remodeling activity (PubMed:23085988). Involved in retrograde transport of lysosomal enzyme receptor IGF2R (PubMed:17148574, PubMed:18596235). May function as link between endosomal transport vesicles and dynactin (Probable). Plays a role in the internalization of EGFR after EGF stimulation (Probable). Involved in EGFR endosomal sorting and degradation; the function involves PIP5K1C isoform 3 and is retromer-independent (PubMed:23602387). Together with PIP5K1C isoform 3 facilitates HGS interaction with ubiquitinated EGFR, which initiates EGFR sorting to intraluminal vesicles (ILVs) of the multivesicular body for subsequent lysosomal degradation (Probable). Involved in E-cadherin sorting and degradation; inhibits PIP5K1C isoform 3-mediated E-cadherin degradation (PubMed:24610942). Plays a role in macropinocytosis (PubMed:18854019, PubMed:21048941).</text>
</comment>
<comment type="subunit">
    <text evidence="5 7 8 10 12 15 16 20 21">Forms heterodimers with BAR domain-containing sorting nexins SNX1 and SNX2; does not homodimerize (PubMed:23085988). The heterodimers are proposed to self-assemble into helical arrays on the membrane to stabilize and expand local membrane curvature underlying endosomal tubule formation. Thought to be a component of the originally described retromer complex (also called SNX-BAR retromer) which is a pentamer containing the heterotrimeric retromer cargo-selective complex (CSC), also described as vacuolar protein sorting subcomplex (VPS), and a heterodimeric membrane-deforming subcomplex formed between SNX1 or SNX2 and SNX5 or SNX6 (also called SNX-BAR subcomplex); the respective CSC and SNX-BAR subcomplexes associate with low affinity (Probable). Interacts with SNX1, SNX2, VPS26A, VPS29, VPS35, DCTN1, DOCK1, MIB1, PIP5K1C isoform 3. Interacts with HGS; increased by PIP5K1C isoform 3 kinase activity and by PtdIns(3P) and/or PtdIns(3,4)P2 (PubMed:16857196, PubMed:16968745, PubMed:18596235, PubMed:19619496, PubMed:23085988, PubMed:23602387, PubMed:24610942).</text>
</comment>
<comment type="subunit">
    <text evidence="17">(Microbial infection) Interacts with human cytomegalovirus proteins UL35 and UL35A; these interactions inhibit the ability of USP7 to form nuclear bodies.</text>
</comment>
<comment type="interaction">
    <interactant intactId="EBI-715760">
        <id>Q9Y5X3</id>
    </interactant>
    <interactant intactId="EBI-743771">
        <id>Q92624</id>
        <label>APPBP2</label>
    </interactant>
    <organismsDiffer>false</organismsDiffer>
    <experiments>3</experiments>
</comment>
<comment type="interaction">
    <interactant intactId="EBI-715760">
        <id>Q9Y5X3</id>
    </interactant>
    <interactant intactId="EBI-2822329">
        <id>Q13596</id>
        <label>SNX1</label>
    </interactant>
    <organismsDiffer>false</organismsDiffer>
    <experiments>5</experiments>
</comment>
<comment type="interaction">
    <interactant intactId="EBI-715760">
        <id>Q9Y5X3</id>
    </interactant>
    <interactant intactId="EBI-1046690">
        <id>O60749</id>
        <label>SNX2</label>
    </interactant>
    <organismsDiffer>false</organismsDiffer>
    <experiments>3</experiments>
</comment>
<comment type="interaction">
    <interactant intactId="EBI-12229025">
        <id>Q9Y5X3-2</id>
    </interactant>
    <interactant intactId="EBI-743771">
        <id>Q92624</id>
        <label>APPBP2</label>
    </interactant>
    <organismsDiffer>false</organismsDiffer>
    <experiments>3</experiments>
</comment>
<comment type="interaction">
    <interactant intactId="EBI-12229025">
        <id>Q9Y5X3-2</id>
    </interactant>
    <interactant intactId="EBI-11524452">
        <id>Q8N9N5-2</id>
        <label>BANP</label>
    </interactant>
    <organismsDiffer>false</organismsDiffer>
    <experiments>3</experiments>
</comment>
<comment type="interaction">
    <interactant intactId="EBI-12229025">
        <id>Q9Y5X3-2</id>
    </interactant>
    <interactant intactId="EBI-372312">
        <id>P28062-2</id>
        <label>PSMB8</label>
    </interactant>
    <organismsDiffer>false</organismsDiffer>
    <experiments>3</experiments>
</comment>
<comment type="subcellular location">
    <subcellularLocation>
        <location evidence="4">Endosome</location>
    </subcellularLocation>
    <subcellularLocation>
        <location evidence="9 16">Early endosome</location>
    </subcellularLocation>
    <subcellularLocation>
        <location evidence="6">Early endosome membrane</location>
        <topology>Peripheral membrane protein</topology>
        <orientation>Cytoplasmic side</orientation>
    </subcellularLocation>
    <subcellularLocation>
        <location evidence="6">Cell membrane</location>
        <topology>Peripheral membrane protein</topology>
        <orientation evidence="11">Cytoplasmic side</orientation>
    </subcellularLocation>
    <subcellularLocation>
        <location>Cytoplasmic vesicle membrane</location>
        <topology>Peripheral membrane protein</topology>
        <orientation>Cytoplasmic side</orientation>
    </subcellularLocation>
    <subcellularLocation>
        <location>Cytoplasm</location>
    </subcellularLocation>
    <subcellularLocation>
        <location>Cell projection</location>
        <location>Phagocytic cup</location>
    </subcellularLocation>
    <subcellularLocation>
        <location>Cell projection</location>
        <location>Ruffle</location>
    </subcellularLocation>
    <text evidence="6 8 13">Recruited to the plasma membrane after EGF stimulation, which leads to increased levels of phosphatidylinositol 3,4-bisphosphate (PdtIns(3,4)P2) (PubMed:15561769). Detected on macropinosomes (PubMed:16968745, PubMed:21048941). Targeted to membrane ruffles in response to EGFR stimulation.</text>
</comment>
<comment type="alternative products">
    <event type="alternative splicing"/>
    <isoform>
        <id>Q9Y5X3-1</id>
        <name>1</name>
        <sequence type="displayed"/>
    </isoform>
    <isoform>
        <id>Q9Y5X3-2</id>
        <name>2</name>
        <sequence type="described" ref="VSP_056386 VSP_056387"/>
    </isoform>
</comment>
<comment type="domain">
    <text evidence="1">The PX domain mediates interaction with membranes enriched in phosphatidylinositol 3,4-bisphosphate and/or phosphatidylinositol 4,5-bisphosphate.</text>
</comment>
<comment type="domain">
    <text evidence="21">The BAR domain is able to sense membrane curvature upon dimerization. Membrane remodeling seems to implicate insertion of an amphipathic helix (AH) in the membrane (Probable).</text>
</comment>
<comment type="similarity">
    <text evidence="23">Belongs to the sorting nexin family.</text>
</comment>
<comment type="caution">
    <text evidence="24">The selectivity for particular phosphatidylinositol lipids is under debate. According to one report (PubMed:19553671), the rat protein binds exclusively to phosphatidylinositol 4,5-bisphosphate, while the human protein has been reported (PubMed:15561769) to bind to phosphatidylinositol 3,4-bisphosphate and also to phosphatidylinositol 3-phosphate.</text>
</comment>
<evidence type="ECO:0000250" key="1"/>
<evidence type="ECO:0000250" key="2">
    <source>
        <dbReference type="UniProtKB" id="B1H267"/>
    </source>
</evidence>
<evidence type="ECO:0000255" key="3">
    <source>
        <dbReference type="PROSITE-ProRule" id="PRU00147"/>
    </source>
</evidence>
<evidence type="ECO:0000269" key="4">
    <source>
    </source>
</evidence>
<evidence type="ECO:0000269" key="5">
    <source>
    </source>
</evidence>
<evidence type="ECO:0000269" key="6">
    <source>
    </source>
</evidence>
<evidence type="ECO:0000269" key="7">
    <source>
    </source>
</evidence>
<evidence type="ECO:0000269" key="8">
    <source>
    </source>
</evidence>
<evidence type="ECO:0000269" key="9">
    <source>
    </source>
</evidence>
<evidence type="ECO:0000269" key="10">
    <source>
    </source>
</evidence>
<evidence type="ECO:0000269" key="11">
    <source>
    </source>
</evidence>
<evidence type="ECO:0000269" key="12">
    <source>
    </source>
</evidence>
<evidence type="ECO:0000269" key="13">
    <source>
    </source>
</evidence>
<evidence type="ECO:0000269" key="14">
    <source>
    </source>
</evidence>
<evidence type="ECO:0000269" key="15">
    <source>
    </source>
</evidence>
<evidence type="ECO:0000269" key="16">
    <source>
    </source>
</evidence>
<evidence type="ECO:0000269" key="17">
    <source>
    </source>
</evidence>
<evidence type="ECO:0000303" key="18">
    <source>
    </source>
</evidence>
<evidence type="ECO:0000303" key="19">
    <source>
    </source>
</evidence>
<evidence type="ECO:0000303" key="20">
    <source>
    </source>
</evidence>
<evidence type="ECO:0000303" key="21">
    <source>
    </source>
</evidence>
<evidence type="ECO:0000303" key="22">
    <source ref="2"/>
</evidence>
<evidence type="ECO:0000305" key="23"/>
<evidence type="ECO:0000305" key="24">
    <source>
    </source>
</evidence>
<evidence type="ECO:0007744" key="25">
    <source>
    </source>
</evidence>
<evidence type="ECO:0007744" key="26">
    <source>
    </source>
</evidence>
<evidence type="ECO:0007744" key="27">
    <source>
    </source>
</evidence>
<evidence type="ECO:0007744" key="28">
    <source>
    </source>
</evidence>
<evidence type="ECO:0007744" key="29">
    <source>
    </source>
</evidence>
<evidence type="ECO:0007829" key="30">
    <source>
        <dbReference type="PDB" id="5TGH"/>
    </source>
</evidence>
<evidence type="ECO:0007829" key="31">
    <source>
        <dbReference type="PDB" id="5WY2"/>
    </source>
</evidence>
<evidence type="ECO:0007829" key="32">
    <source>
        <dbReference type="PDB" id="8A1G"/>
    </source>
</evidence>
<dbReference type="EMBL" id="AF121855">
    <property type="protein sequence ID" value="AAD27828.1"/>
    <property type="molecule type" value="mRNA"/>
</dbReference>
<dbReference type="EMBL" id="BT007191">
    <property type="protein sequence ID" value="AAP35855.1"/>
    <property type="molecule type" value="mRNA"/>
</dbReference>
<dbReference type="EMBL" id="AK001793">
    <property type="protein sequence ID" value="BAA91914.1"/>
    <property type="molecule type" value="mRNA"/>
</dbReference>
<dbReference type="EMBL" id="AK123903">
    <property type="protein sequence ID" value="BAG53980.1"/>
    <property type="molecule type" value="mRNA"/>
</dbReference>
<dbReference type="EMBL" id="AL121585">
    <property type="status" value="NOT_ANNOTATED_CDS"/>
    <property type="molecule type" value="Genomic_DNA"/>
</dbReference>
<dbReference type="EMBL" id="BC000100">
    <property type="status" value="NOT_ANNOTATED_CDS"/>
    <property type="molecule type" value="mRNA"/>
</dbReference>
<dbReference type="EMBL" id="CH471133">
    <property type="protein sequence ID" value="EAX10264.1"/>
    <property type="molecule type" value="Genomic_DNA"/>
</dbReference>
<dbReference type="EMBL" id="CH471133">
    <property type="protein sequence ID" value="EAX10265.1"/>
    <property type="molecule type" value="Genomic_DNA"/>
</dbReference>
<dbReference type="EMBL" id="CH471133">
    <property type="protein sequence ID" value="EAX10266.1"/>
    <property type="molecule type" value="Genomic_DNA"/>
</dbReference>
<dbReference type="EMBL" id="CH471133">
    <property type="protein sequence ID" value="EAX10268.1"/>
    <property type="molecule type" value="Genomic_DNA"/>
</dbReference>
<dbReference type="EMBL" id="BC093623">
    <property type="protein sequence ID" value="AAH93623.1"/>
    <property type="molecule type" value="mRNA"/>
</dbReference>
<dbReference type="EMBL" id="BC093980">
    <property type="protein sequence ID" value="AAH93980.1"/>
    <property type="molecule type" value="mRNA"/>
</dbReference>
<dbReference type="EMBL" id="BC143274">
    <property type="protein sequence ID" value="AAI43275.1"/>
    <property type="molecule type" value="mRNA"/>
</dbReference>
<dbReference type="CCDS" id="CCDS13130.1">
    <molecule id="Q9Y5X3-1"/>
</dbReference>
<dbReference type="RefSeq" id="NP_055241.1">
    <molecule id="Q9Y5X3-1"/>
    <property type="nucleotide sequence ID" value="NM_014426.4"/>
</dbReference>
<dbReference type="RefSeq" id="NP_689413.1">
    <molecule id="Q9Y5X3-1"/>
    <property type="nucleotide sequence ID" value="NM_152227.3"/>
</dbReference>
<dbReference type="PDB" id="1SYS">
    <property type="method" value="X-ray"/>
    <property type="resolution" value="2.40 A"/>
    <property type="chains" value="C=257-265"/>
</dbReference>
<dbReference type="PDB" id="5TGH">
    <property type="method" value="X-ray"/>
    <property type="resolution" value="2.80 A"/>
    <property type="chains" value="A/C/E/G=22-170"/>
</dbReference>
<dbReference type="PDB" id="5TGI">
    <property type="method" value="X-ray"/>
    <property type="resolution" value="1.98 A"/>
    <property type="chains" value="A/B=22-170"/>
</dbReference>
<dbReference type="PDB" id="5TGJ">
    <property type="method" value="X-ray"/>
    <property type="resolution" value="2.60 A"/>
    <property type="chains" value="A/C=22-170"/>
</dbReference>
<dbReference type="PDB" id="5WY2">
    <property type="method" value="X-ray"/>
    <property type="resolution" value="1.90 A"/>
    <property type="chains" value="A/C=20-180"/>
</dbReference>
<dbReference type="PDB" id="6N5X">
    <property type="method" value="X-ray"/>
    <property type="resolution" value="2.05 A"/>
    <property type="chains" value="A=22-170"/>
</dbReference>
<dbReference type="PDB" id="6N5Y">
    <property type="method" value="X-ray"/>
    <property type="resolution" value="2.26 A"/>
    <property type="chains" value="A=22-170"/>
</dbReference>
<dbReference type="PDB" id="6N5Z">
    <property type="method" value="X-ray"/>
    <property type="resolution" value="2.45 A"/>
    <property type="chains" value="A/B=22-170"/>
</dbReference>
<dbReference type="PDB" id="8A1G">
    <property type="method" value="X-ray"/>
    <property type="resolution" value="2.50 A"/>
    <property type="chains" value="C/D=195-404"/>
</dbReference>
<dbReference type="PDB" id="8ABQ">
    <property type="method" value="X-ray"/>
    <property type="resolution" value="2.81 A"/>
    <property type="chains" value="C/D=195-404"/>
</dbReference>
<dbReference type="PDB" id="8AFZ">
    <property type="method" value="EM"/>
    <property type="resolution" value="10.00 A"/>
    <property type="chains" value="B=1-404"/>
</dbReference>
<dbReference type="PDBsum" id="1SYS"/>
<dbReference type="PDBsum" id="5TGH"/>
<dbReference type="PDBsum" id="5TGI"/>
<dbReference type="PDBsum" id="5TGJ"/>
<dbReference type="PDBsum" id="5WY2"/>
<dbReference type="PDBsum" id="6N5X"/>
<dbReference type="PDBsum" id="6N5Y"/>
<dbReference type="PDBsum" id="6N5Z"/>
<dbReference type="PDBsum" id="8A1G"/>
<dbReference type="PDBsum" id="8ABQ"/>
<dbReference type="PDBsum" id="8AFZ"/>
<dbReference type="EMDB" id="EMD-15413"/>
<dbReference type="SMR" id="Q9Y5X3"/>
<dbReference type="BioGRID" id="118022">
    <property type="interactions" value="151"/>
</dbReference>
<dbReference type="ComplexPortal" id="CPX-8823">
    <property type="entry name" value="SNX1-SNX5 sorting nexin complex"/>
</dbReference>
<dbReference type="ComplexPortal" id="CPX-8838">
    <property type="entry name" value="SNX2-SNX5 sorting nexin complex"/>
</dbReference>
<dbReference type="FunCoup" id="Q9Y5X3">
    <property type="interactions" value="3647"/>
</dbReference>
<dbReference type="IntAct" id="Q9Y5X3">
    <property type="interactions" value="75"/>
</dbReference>
<dbReference type="MINT" id="Q9Y5X3"/>
<dbReference type="STRING" id="9606.ENSP00000366998"/>
<dbReference type="TCDB" id="3.A.34.1.1">
    <property type="family name" value="the sorting nexins of the escrt complexes (sn-escrt)"/>
</dbReference>
<dbReference type="GlyGen" id="Q9Y5X3">
    <property type="glycosylation" value="1 site, 1 O-linked glycan (1 site)"/>
</dbReference>
<dbReference type="iPTMnet" id="Q9Y5X3"/>
<dbReference type="MetOSite" id="Q9Y5X3"/>
<dbReference type="PhosphoSitePlus" id="Q9Y5X3"/>
<dbReference type="BioMuta" id="SNX5"/>
<dbReference type="DMDM" id="10720289"/>
<dbReference type="jPOST" id="Q9Y5X3"/>
<dbReference type="MassIVE" id="Q9Y5X3"/>
<dbReference type="PaxDb" id="9606-ENSP00000366998"/>
<dbReference type="PeptideAtlas" id="Q9Y5X3"/>
<dbReference type="ProteomicsDB" id="86528">
    <molecule id="Q9Y5X3-1"/>
</dbReference>
<dbReference type="Pumba" id="Q9Y5X3"/>
<dbReference type="Antibodypedia" id="24488">
    <property type="antibodies" value="231 antibodies from 32 providers"/>
</dbReference>
<dbReference type="DNASU" id="27131"/>
<dbReference type="Ensembl" id="ENST00000377759.9">
    <molecule id="Q9Y5X3-1"/>
    <property type="protein sequence ID" value="ENSP00000366988.3"/>
    <property type="gene ID" value="ENSG00000089006.17"/>
</dbReference>
<dbReference type="Ensembl" id="ENST00000377768.7">
    <molecule id="Q9Y5X3-1"/>
    <property type="protein sequence ID" value="ENSP00000366998.3"/>
    <property type="gene ID" value="ENSG00000089006.17"/>
</dbReference>
<dbReference type="Ensembl" id="ENST00000606557.1">
    <molecule id="Q9Y5X3-2"/>
    <property type="protein sequence ID" value="ENSP00000475510.1"/>
    <property type="gene ID" value="ENSG00000089006.17"/>
</dbReference>
<dbReference type="GeneID" id="27131"/>
<dbReference type="KEGG" id="hsa:27131"/>
<dbReference type="MANE-Select" id="ENST00000377759.9">
    <property type="protein sequence ID" value="ENSP00000366988.3"/>
    <property type="RefSeq nucleotide sequence ID" value="NM_014426.4"/>
    <property type="RefSeq protein sequence ID" value="NP_055241.1"/>
</dbReference>
<dbReference type="UCSC" id="uc002wqc.5">
    <molecule id="Q9Y5X3-1"/>
    <property type="organism name" value="human"/>
</dbReference>
<dbReference type="AGR" id="HGNC:14969"/>
<dbReference type="CTD" id="27131"/>
<dbReference type="DisGeNET" id="27131"/>
<dbReference type="GeneCards" id="SNX5"/>
<dbReference type="HGNC" id="HGNC:14969">
    <property type="gene designation" value="SNX5"/>
</dbReference>
<dbReference type="HPA" id="ENSG00000089006">
    <property type="expression patterns" value="Low tissue specificity"/>
</dbReference>
<dbReference type="MIM" id="605937">
    <property type="type" value="gene"/>
</dbReference>
<dbReference type="neXtProt" id="NX_Q9Y5X3"/>
<dbReference type="OpenTargets" id="ENSG00000089006"/>
<dbReference type="PharmGKB" id="PA37945"/>
<dbReference type="VEuPathDB" id="HostDB:ENSG00000089006"/>
<dbReference type="eggNOG" id="KOG1660">
    <property type="taxonomic scope" value="Eukaryota"/>
</dbReference>
<dbReference type="GeneTree" id="ENSGT00940000154632"/>
<dbReference type="HOGENOM" id="CLU_040966_0_0_1"/>
<dbReference type="InParanoid" id="Q9Y5X3"/>
<dbReference type="OMA" id="ECCQRFE"/>
<dbReference type="OrthoDB" id="9976382at2759"/>
<dbReference type="PAN-GO" id="Q9Y5X3">
    <property type="GO annotations" value="5 GO annotations based on evolutionary models"/>
</dbReference>
<dbReference type="PhylomeDB" id="Q9Y5X3"/>
<dbReference type="TreeFam" id="TF313698"/>
<dbReference type="PathwayCommons" id="Q9Y5X3"/>
<dbReference type="Reactome" id="R-HSA-432722">
    <property type="pathway name" value="Golgi Associated Vesicle Biogenesis"/>
</dbReference>
<dbReference type="SignaLink" id="Q9Y5X3"/>
<dbReference type="SIGNOR" id="Q9Y5X3"/>
<dbReference type="BioGRID-ORCS" id="27131">
    <property type="hits" value="12 hits in 1151 CRISPR screens"/>
</dbReference>
<dbReference type="CD-CODE" id="FB4E32DD">
    <property type="entry name" value="Presynaptic clusters and postsynaptic densities"/>
</dbReference>
<dbReference type="ChiTaRS" id="SNX5">
    <property type="organism name" value="human"/>
</dbReference>
<dbReference type="EvolutionaryTrace" id="Q9Y5X3"/>
<dbReference type="GeneWiki" id="SNX5"/>
<dbReference type="GenomeRNAi" id="27131"/>
<dbReference type="Pharos" id="Q9Y5X3">
    <property type="development level" value="Tbio"/>
</dbReference>
<dbReference type="PRO" id="PR:Q9Y5X3"/>
<dbReference type="Proteomes" id="UP000005640">
    <property type="component" value="Chromosome 20"/>
</dbReference>
<dbReference type="RNAct" id="Q9Y5X3">
    <property type="molecule type" value="protein"/>
</dbReference>
<dbReference type="Bgee" id="ENSG00000089006">
    <property type="expression patterns" value="Expressed in left lobe of thyroid gland and 201 other cell types or tissues"/>
</dbReference>
<dbReference type="ExpressionAtlas" id="Q9Y5X3">
    <property type="expression patterns" value="baseline and differential"/>
</dbReference>
<dbReference type="GO" id="GO:0005903">
    <property type="term" value="C:brush border"/>
    <property type="evidence" value="ECO:0007669"/>
    <property type="project" value="Ensembl"/>
</dbReference>
<dbReference type="GO" id="GO:0098559">
    <property type="term" value="C:cytoplasmic side of early endosome membrane"/>
    <property type="evidence" value="ECO:0000314"/>
    <property type="project" value="UniProtKB"/>
</dbReference>
<dbReference type="GO" id="GO:0009898">
    <property type="term" value="C:cytoplasmic side of plasma membrane"/>
    <property type="evidence" value="ECO:0000314"/>
    <property type="project" value="UniProtKB"/>
</dbReference>
<dbReference type="GO" id="GO:0005829">
    <property type="term" value="C:cytosol"/>
    <property type="evidence" value="ECO:0000314"/>
    <property type="project" value="HPA"/>
</dbReference>
<dbReference type="GO" id="GO:0005768">
    <property type="term" value="C:endosome"/>
    <property type="evidence" value="ECO:0000318"/>
    <property type="project" value="GO_Central"/>
</dbReference>
<dbReference type="GO" id="GO:0043231">
    <property type="term" value="C:intracellular membrane-bounded organelle"/>
    <property type="evidence" value="ECO:0000314"/>
    <property type="project" value="HPA"/>
</dbReference>
<dbReference type="GO" id="GO:0070685">
    <property type="term" value="C:macropinocytic cup"/>
    <property type="evidence" value="ECO:0000314"/>
    <property type="project" value="UniProtKB"/>
</dbReference>
<dbReference type="GO" id="GO:0048471">
    <property type="term" value="C:perinuclear region of cytoplasm"/>
    <property type="evidence" value="ECO:0000314"/>
    <property type="project" value="CACAO"/>
</dbReference>
<dbReference type="GO" id="GO:0001891">
    <property type="term" value="C:phagocytic cup"/>
    <property type="evidence" value="ECO:0007669"/>
    <property type="project" value="UniProtKB-SubCell"/>
</dbReference>
<dbReference type="GO" id="GO:0030904">
    <property type="term" value="C:retromer complex"/>
    <property type="evidence" value="ECO:0000314"/>
    <property type="project" value="UniProtKB"/>
</dbReference>
<dbReference type="GO" id="GO:0030905">
    <property type="term" value="C:retromer, tubulation complex"/>
    <property type="evidence" value="ECO:0000303"/>
    <property type="project" value="ParkinsonsUK-UCL"/>
</dbReference>
<dbReference type="GO" id="GO:0001726">
    <property type="term" value="C:ruffle"/>
    <property type="evidence" value="ECO:0007669"/>
    <property type="project" value="UniProtKB-SubCell"/>
</dbReference>
<dbReference type="GO" id="GO:0097422">
    <property type="term" value="C:tubular endosome"/>
    <property type="evidence" value="ECO:0000314"/>
    <property type="project" value="UniProtKB"/>
</dbReference>
<dbReference type="GO" id="GO:0045296">
    <property type="term" value="F:cadherin binding"/>
    <property type="evidence" value="ECO:0007005"/>
    <property type="project" value="BHF-UCL"/>
</dbReference>
<dbReference type="GO" id="GO:0031748">
    <property type="term" value="F:D1 dopamine receptor binding"/>
    <property type="evidence" value="ECO:0007669"/>
    <property type="project" value="Ensembl"/>
</dbReference>
<dbReference type="GO" id="GO:0034452">
    <property type="term" value="F:dynactin binding"/>
    <property type="evidence" value="ECO:0000314"/>
    <property type="project" value="UniProtKB"/>
</dbReference>
<dbReference type="GO" id="GO:0035091">
    <property type="term" value="F:phosphatidylinositol binding"/>
    <property type="evidence" value="ECO:0000314"/>
    <property type="project" value="UniProtKB"/>
</dbReference>
<dbReference type="GO" id="GO:0080025">
    <property type="term" value="F:phosphatidylinositol-3,5-bisphosphate binding"/>
    <property type="evidence" value="ECO:0007669"/>
    <property type="project" value="Ensembl"/>
</dbReference>
<dbReference type="GO" id="GO:0070273">
    <property type="term" value="F:phosphatidylinositol-4-phosphate binding"/>
    <property type="evidence" value="ECO:0007669"/>
    <property type="project" value="Ensembl"/>
</dbReference>
<dbReference type="GO" id="GO:0010314">
    <property type="term" value="F:phosphatidylinositol-5-phosphate binding"/>
    <property type="evidence" value="ECO:0007669"/>
    <property type="project" value="Ensembl"/>
</dbReference>
<dbReference type="GO" id="GO:0007174">
    <property type="term" value="P:epidermal growth factor catabolic process"/>
    <property type="evidence" value="ECO:0007669"/>
    <property type="project" value="Ensembl"/>
</dbReference>
<dbReference type="GO" id="GO:0006886">
    <property type="term" value="P:intracellular protein transport"/>
    <property type="evidence" value="ECO:0007669"/>
    <property type="project" value="InterPro"/>
</dbReference>
<dbReference type="GO" id="GO:0045776">
    <property type="term" value="P:negative regulation of blood pressure"/>
    <property type="evidence" value="ECO:0007669"/>
    <property type="project" value="Ensembl"/>
</dbReference>
<dbReference type="GO" id="GO:0006907">
    <property type="term" value="P:pinocytosis"/>
    <property type="evidence" value="ECO:0000314"/>
    <property type="project" value="UniProtKB"/>
</dbReference>
<dbReference type="GO" id="GO:0045893">
    <property type="term" value="P:positive regulation of DNA-templated transcription"/>
    <property type="evidence" value="ECO:0000315"/>
    <property type="project" value="CACAO"/>
</dbReference>
<dbReference type="GO" id="GO:0046628">
    <property type="term" value="P:positive regulation of insulin receptor signaling pathway"/>
    <property type="evidence" value="ECO:0000315"/>
    <property type="project" value="CACAO"/>
</dbReference>
<dbReference type="GO" id="GO:0016241">
    <property type="term" value="P:regulation of macroautophagy"/>
    <property type="evidence" value="ECO:0000303"/>
    <property type="project" value="ParkinsonsUK-UCL"/>
</dbReference>
<dbReference type="GO" id="GO:0042147">
    <property type="term" value="P:retrograde transport, endosome to Golgi"/>
    <property type="evidence" value="ECO:0000315"/>
    <property type="project" value="UniProtKB"/>
</dbReference>
<dbReference type="CDD" id="cd07663">
    <property type="entry name" value="BAR_SNX5"/>
    <property type="match status" value="1"/>
</dbReference>
<dbReference type="CDD" id="cd07291">
    <property type="entry name" value="PX_SNX5"/>
    <property type="match status" value="1"/>
</dbReference>
<dbReference type="FunFam" id="1.20.1270.60:FF:000008">
    <property type="entry name" value="Sorting nexin"/>
    <property type="match status" value="1"/>
</dbReference>
<dbReference type="FunFam" id="3.30.1520.10:FF:000001">
    <property type="entry name" value="Sorting nexin"/>
    <property type="match status" value="1"/>
</dbReference>
<dbReference type="Gene3D" id="1.20.1270.60">
    <property type="entry name" value="Arfaptin homology (AH) domain/BAR domain"/>
    <property type="match status" value="1"/>
</dbReference>
<dbReference type="Gene3D" id="3.30.1520.10">
    <property type="entry name" value="Phox-like domain"/>
    <property type="match status" value="1"/>
</dbReference>
<dbReference type="InterPro" id="IPR027267">
    <property type="entry name" value="AH/BAR_dom_sf"/>
</dbReference>
<dbReference type="InterPro" id="IPR028654">
    <property type="entry name" value="BAR_SNX5"/>
</dbReference>
<dbReference type="InterPro" id="IPR001683">
    <property type="entry name" value="PX_dom"/>
</dbReference>
<dbReference type="InterPro" id="IPR036871">
    <property type="entry name" value="PX_dom_sf"/>
</dbReference>
<dbReference type="InterPro" id="IPR042135">
    <property type="entry name" value="PX_SNX5"/>
</dbReference>
<dbReference type="InterPro" id="IPR014637">
    <property type="entry name" value="SNX5/SNX6/SNX32"/>
</dbReference>
<dbReference type="InterPro" id="IPR015404">
    <property type="entry name" value="Vps5_C"/>
</dbReference>
<dbReference type="PANTHER" id="PTHR45850">
    <property type="entry name" value="SORTING NEXIN FAMILY MEMBER"/>
    <property type="match status" value="1"/>
</dbReference>
<dbReference type="PANTHER" id="PTHR45850:SF5">
    <property type="entry name" value="SORTING NEXIN-5"/>
    <property type="match status" value="1"/>
</dbReference>
<dbReference type="Pfam" id="PF00787">
    <property type="entry name" value="PX"/>
    <property type="match status" value="1"/>
</dbReference>
<dbReference type="Pfam" id="PF09325">
    <property type="entry name" value="Vps5"/>
    <property type="match status" value="1"/>
</dbReference>
<dbReference type="PIRSF" id="PIRSF036924">
    <property type="entry name" value="Snx5_Snx6"/>
    <property type="match status" value="1"/>
</dbReference>
<dbReference type="SUPFAM" id="SSF103657">
    <property type="entry name" value="BAR/IMD domain-like"/>
    <property type="match status" value="1"/>
</dbReference>
<dbReference type="SUPFAM" id="SSF64268">
    <property type="entry name" value="PX domain"/>
    <property type="match status" value="1"/>
</dbReference>
<dbReference type="PROSITE" id="PS50195">
    <property type="entry name" value="PX"/>
    <property type="match status" value="1"/>
</dbReference>
<gene>
    <name type="primary">SNX5</name>
</gene>
<organism>
    <name type="scientific">Homo sapiens</name>
    <name type="common">Human</name>
    <dbReference type="NCBI Taxonomy" id="9606"/>
    <lineage>
        <taxon>Eukaryota</taxon>
        <taxon>Metazoa</taxon>
        <taxon>Chordata</taxon>
        <taxon>Craniata</taxon>
        <taxon>Vertebrata</taxon>
        <taxon>Euteleostomi</taxon>
        <taxon>Mammalia</taxon>
        <taxon>Eutheria</taxon>
        <taxon>Euarchontoglires</taxon>
        <taxon>Primates</taxon>
        <taxon>Haplorrhini</taxon>
        <taxon>Catarrhini</taxon>
        <taxon>Hominidae</taxon>
        <taxon>Homo</taxon>
    </lineage>
</organism>